<organism>
    <name type="scientific">Oryza sativa subsp. japonica</name>
    <name type="common">Rice</name>
    <dbReference type="NCBI Taxonomy" id="39947"/>
    <lineage>
        <taxon>Eukaryota</taxon>
        <taxon>Viridiplantae</taxon>
        <taxon>Streptophyta</taxon>
        <taxon>Embryophyta</taxon>
        <taxon>Tracheophyta</taxon>
        <taxon>Spermatophyta</taxon>
        <taxon>Magnoliopsida</taxon>
        <taxon>Liliopsida</taxon>
        <taxon>Poales</taxon>
        <taxon>Poaceae</taxon>
        <taxon>BOP clade</taxon>
        <taxon>Oryzoideae</taxon>
        <taxon>Oryzeae</taxon>
        <taxon>Oryzinae</taxon>
        <taxon>Oryza</taxon>
        <taxon>Oryza sativa</taxon>
    </lineage>
</organism>
<sequence length="506" mass="56637">MPPTSVSPPRTAPGPANPSPAHPSRVRVIHPGGGKPGGPVVYWMLRDQRLADNWALLHAAGLAAASASPLAVAFALFPRPFLLSARRRQLGFLLRGLRRLAADAAARHLPFFLFTGGPAEIPALVRRLGASTLVADFSPLRPVREALDAVVGDLRREAPGVAVHQVDAHNVVPVWTASAKMEYSAKTFRGKVSKVMDEYLVEFPELPAVVPWDREQPEGVDWDALIARVCSEAENVPEIDWCEPGEEAAIEALLGSKDGFLTKRIKSYETDRNDPTKPRALSGLSPYLHFGHISAQRCALEAKKCRHLSPKSVDAFLEELVVRRELADNFCYYQPQYDSLSGAWEWARKTLMDHAADKREHIYTREQLENAKTHDPLWNASQLEMVHHGKMHGFMRMYWAKKILEWTSGPEEALSTAIYLNDKYEIDGRDPSGYVGCMWSICGLHDQGWKERPVFGKIRYMNYAGCKRKFDVDAYISYVKRLAGQSKKRNAEESPNPVVKLSKSQH</sequence>
<reference key="1">
    <citation type="journal article" date="2003" name="Mol. Genet. Genomics">
        <title>A gene for a Class II DNA photolyase from Oryza sativa: cloning of the cDNA by dilution-amplification.</title>
        <authorList>
            <person name="Hirouchi T."/>
            <person name="Nakajima S."/>
            <person name="Najrana T."/>
            <person name="Tanaka M."/>
            <person name="Matsunaga T."/>
            <person name="Hidema J."/>
            <person name="Teranishi M."/>
            <person name="Fujino T."/>
            <person name="Kumagai T."/>
            <person name="Yamamoto K."/>
        </authorList>
    </citation>
    <scope>NUCLEOTIDE SEQUENCE [MRNA]</scope>
    <scope>FUNCTION</scope>
    <source>
        <strain>cv. Sasanishiki</strain>
    </source>
</reference>
<reference key="2">
    <citation type="journal article" date="2004" name="Plant Cell Physiol.">
        <title>Ultraviolet-B sensitivities in Japanese lowland rice cultivars: cyclobutane pyrimidine dimer photolyase activity and gene mutation.</title>
        <authorList>
            <person name="Teranishi M."/>
            <person name="Iwamatsu Y."/>
            <person name="Hidema J."/>
            <person name="Kumagai T."/>
        </authorList>
    </citation>
    <scope>NUCLEOTIDE SEQUENCE [GENOMIC DNA]</scope>
    <source>
        <strain>cv. Nohrin</strain>
    </source>
</reference>
<reference key="3">
    <citation type="journal article" date="2005" name="Genetics">
        <title>qUVR-10, a major quantitative trait locus for ultraviolet-B resistance in rice, encodes cyclobutane pyrimidine dimer photolyase.</title>
        <authorList>
            <person name="Ueda T."/>
            <person name="Sato T."/>
            <person name="Hidema J."/>
            <person name="Hirouchi T."/>
            <person name="Yamamoto K."/>
            <person name="Kumagai T."/>
            <person name="Yano M."/>
        </authorList>
    </citation>
    <scope>NUCLEOTIDE SEQUENCE [GENOMIC DNA]</scope>
    <scope>FUNCTION</scope>
</reference>
<reference key="4">
    <citation type="journal article" date="2007" name="Genes Genet. Syst.">
        <title>Biochemical and biological properties of DNA photolyases derived from utraviolet-sensitive rice cultivars.</title>
        <authorList>
            <person name="Ymamoto A."/>
            <person name="Hirouchi T."/>
            <person name="Mori T."/>
            <person name="Teranishi M."/>
            <person name="Hidema J."/>
            <person name="Morioka H."/>
            <person name="Kumagai T."/>
            <person name="Yamamoto K."/>
        </authorList>
    </citation>
    <scope>NUCLEOTIDE SEQUENCE [MRNA]</scope>
    <scope>FUNCTION</scope>
    <source>
        <strain>cv. Gulfmont</strain>
    </source>
</reference>
<reference key="5">
    <citation type="journal article" date="2003" name="Science">
        <title>In-depth view of structure, activity, and evolution of rice chromosome 10.</title>
        <authorList>
            <person name="Yu Y."/>
            <person name="Rambo T."/>
            <person name="Currie J."/>
            <person name="Saski C."/>
            <person name="Kim H.-R."/>
            <person name="Collura K."/>
            <person name="Thompson S."/>
            <person name="Simmons J."/>
            <person name="Yang T.-J."/>
            <person name="Nah G."/>
            <person name="Patel A.J."/>
            <person name="Thurmond S."/>
            <person name="Henry D."/>
            <person name="Oates R."/>
            <person name="Palmer M."/>
            <person name="Pries G."/>
            <person name="Gibson J."/>
            <person name="Anderson H."/>
            <person name="Paradkar M."/>
            <person name="Crane L."/>
            <person name="Dale J."/>
            <person name="Carver M.B."/>
            <person name="Wood T."/>
            <person name="Frisch D."/>
            <person name="Engler F."/>
            <person name="Soderlund C."/>
            <person name="Palmer L.E."/>
            <person name="Teytelman L."/>
            <person name="Nascimento L."/>
            <person name="De la Bastide M."/>
            <person name="Spiegel L."/>
            <person name="Ware D."/>
            <person name="O'Shaughnessy A."/>
            <person name="Dike S."/>
            <person name="Dedhia N."/>
            <person name="Preston R."/>
            <person name="Huang E."/>
            <person name="Ferraro K."/>
            <person name="Kuit K."/>
            <person name="Miller B."/>
            <person name="Zutavern T."/>
            <person name="Katzenberger F."/>
            <person name="Muller S."/>
            <person name="Balija V."/>
            <person name="Martienssen R.A."/>
            <person name="Stein L."/>
            <person name="Minx P."/>
            <person name="Johnson D."/>
            <person name="Cordum H."/>
            <person name="Mardis E."/>
            <person name="Cheng Z."/>
            <person name="Jiang J."/>
            <person name="Wilson R."/>
            <person name="McCombie W.R."/>
            <person name="Wing R.A."/>
            <person name="Yuan Q."/>
            <person name="Ouyang S."/>
            <person name="Liu J."/>
            <person name="Jones K.M."/>
            <person name="Gansberger K."/>
            <person name="Moffat K."/>
            <person name="Hill J."/>
            <person name="Tsitrin T."/>
            <person name="Overton L."/>
            <person name="Bera J."/>
            <person name="Kim M."/>
            <person name="Jin S."/>
            <person name="Tallon L."/>
            <person name="Ciecko A."/>
            <person name="Pai G."/>
            <person name="Van Aken S."/>
            <person name="Utterback T."/>
            <person name="Reidmuller S."/>
            <person name="Bormann J."/>
            <person name="Feldblyum T."/>
            <person name="Hsiao J."/>
            <person name="Zismann V."/>
            <person name="Blunt S."/>
            <person name="de Vazeille A.R."/>
            <person name="Shaffer T."/>
            <person name="Koo H."/>
            <person name="Suh B."/>
            <person name="Yang Q."/>
            <person name="Haas B."/>
            <person name="Peterson J."/>
            <person name="Pertea M."/>
            <person name="Volfovsky N."/>
            <person name="Wortman J."/>
            <person name="White O."/>
            <person name="Salzberg S.L."/>
            <person name="Fraser C.M."/>
            <person name="Buell C.R."/>
            <person name="Messing J."/>
            <person name="Song R."/>
            <person name="Fuks G."/>
            <person name="Llaca V."/>
            <person name="Kovchak S."/>
            <person name="Young S."/>
            <person name="Bowers J.E."/>
            <person name="Paterson A.H."/>
            <person name="Johns M.A."/>
            <person name="Mao L."/>
            <person name="Pan H."/>
            <person name="Dean R.A."/>
        </authorList>
    </citation>
    <scope>NUCLEOTIDE SEQUENCE [LARGE SCALE GENOMIC DNA]</scope>
    <source>
        <strain>cv. Nipponbare</strain>
    </source>
</reference>
<reference key="6">
    <citation type="journal article" date="2005" name="Nature">
        <title>The map-based sequence of the rice genome.</title>
        <authorList>
            <consortium name="International rice genome sequencing project (IRGSP)"/>
        </authorList>
    </citation>
    <scope>NUCLEOTIDE SEQUENCE [LARGE SCALE GENOMIC DNA]</scope>
    <source>
        <strain>cv. Nipponbare</strain>
    </source>
</reference>
<reference key="7">
    <citation type="journal article" date="2008" name="Nucleic Acids Res.">
        <title>The rice annotation project database (RAP-DB): 2008 update.</title>
        <authorList>
            <consortium name="The rice annotation project (RAP)"/>
        </authorList>
    </citation>
    <scope>GENOME REANNOTATION</scope>
    <source>
        <strain>cv. Nipponbare</strain>
    </source>
</reference>
<reference key="8">
    <citation type="journal article" date="2013" name="Rice">
        <title>Improvement of the Oryza sativa Nipponbare reference genome using next generation sequence and optical map data.</title>
        <authorList>
            <person name="Kawahara Y."/>
            <person name="de la Bastide M."/>
            <person name="Hamilton J.P."/>
            <person name="Kanamori H."/>
            <person name="McCombie W.R."/>
            <person name="Ouyang S."/>
            <person name="Schwartz D.C."/>
            <person name="Tanaka T."/>
            <person name="Wu J."/>
            <person name="Zhou S."/>
            <person name="Childs K.L."/>
            <person name="Davidson R.M."/>
            <person name="Lin H."/>
            <person name="Quesada-Ocampo L."/>
            <person name="Vaillancourt B."/>
            <person name="Sakai H."/>
            <person name="Lee S.S."/>
            <person name="Kim J."/>
            <person name="Numa H."/>
            <person name="Itoh T."/>
            <person name="Buell C.R."/>
            <person name="Matsumoto T."/>
        </authorList>
    </citation>
    <scope>GENOME REANNOTATION</scope>
    <source>
        <strain>cv. Nipponbare</strain>
    </source>
</reference>
<reference key="9">
    <citation type="journal article" date="2004" name="Nucleic Acids Res.">
        <title>DNA repair in higher plants; photoreactivation is the major DNA repair pathway in non-proliferating cells while excision repair (nucleotide excision repair and base excision repair) is active in proliferating cells.</title>
        <authorList>
            <person name="Kimura S."/>
            <person name="Tahira Y."/>
            <person name="Ishibashi T."/>
            <person name="Mori Y."/>
            <person name="Mori T."/>
            <person name="Hashimoto J."/>
            <person name="Sakaguchi K."/>
        </authorList>
    </citation>
    <scope>TISSUE SPECIFICITY</scope>
</reference>
<reference key="10">
    <citation type="journal article" date="2007" name="Plant J.">
        <title>Increase in CPD photolyase activity functions effectively to prevent growth inhibition caused by UVB radiation.</title>
        <authorList>
            <person name="Hidema J."/>
            <person name="Taguchi T."/>
            <person name="Ono T."/>
            <person name="Teranishi M."/>
            <person name="Yamamoto K."/>
            <person name="Kumagai T."/>
        </authorList>
    </citation>
    <scope>FUNCTION</scope>
</reference>
<reference key="11">
    <citation type="journal article" date="2008" name="Plant Physiol.">
        <title>The native cyclobutane pyrimidine dimer photolyase of rice is phosphorylated.</title>
        <authorList>
            <person name="Teranishi M."/>
            <person name="Nakamura K."/>
            <person name="Morioka H."/>
            <person name="Yamamoto K."/>
            <person name="Hidema J."/>
        </authorList>
    </citation>
    <scope>FUNCTION</scope>
    <scope>PHOSPHORYLATION AT SER-312</scope>
    <scope>IDENTIFICATION BY MASS SPECTROMETRY</scope>
</reference>
<reference key="12">
    <citation type="journal article" date="2010" name="DNA Repair">
        <title>Light-induced activation of class II cyclobutane pyrimidine dimer photolyases.</title>
        <authorList>
            <person name="Okafuji A."/>
            <person name="Biskup T."/>
            <person name="Hitomi K."/>
            <person name="Getzoff E.D."/>
            <person name="Kaiser G."/>
            <person name="Batschauer A."/>
            <person name="Bacher A."/>
            <person name="Hidema J."/>
            <person name="Teranishi M."/>
            <person name="Yamamoto K."/>
            <person name="Schleicher E."/>
            <person name="Weber S."/>
        </authorList>
    </citation>
    <scope>FUNCTION</scope>
    <scope>COFACTOR</scope>
</reference>
<reference key="13">
    <citation type="journal article" date="2012" name="J. Biol. Chem.">
        <title>Eukaryotic class II cyclobutane pyrimidine dimer photolyase structure reveals basis for improved ultraviolet tolerance in plants.</title>
        <authorList>
            <person name="Hitomi K."/>
            <person name="Arvai A.S."/>
            <person name="Yamamoto J."/>
            <person name="Hitomi C."/>
            <person name="Teranishi M."/>
            <person name="Hirouchi T."/>
            <person name="Yamamoto K."/>
            <person name="Iwai S."/>
            <person name="Tainer J.A."/>
            <person name="Hidema J."/>
            <person name="Getzoff E.D."/>
        </authorList>
    </citation>
    <scope>X-RAY CRYSTALLOGRAPHY (1.71 ANGSTROMS) IN COMPLEX WITH FAD</scope>
</reference>
<reference key="14">
    <citation type="journal article" date="2014" name="J. Hered.">
        <title>Unraveling low-level gamma radiation--responsive changes in expression of early and late genes in leaves of rice seedlings at Iitate Village, Fukushima.</title>
        <authorList>
            <person name="Hayashi G."/>
            <person name="Shibato J."/>
            <person name="Imanaka T."/>
            <person name="Cho K."/>
            <person name="Kubo A."/>
            <person name="Kikuchi S."/>
            <person name="Satoh K."/>
            <person name="Kimura S."/>
            <person name="Ozawa S."/>
            <person name="Fukutani S."/>
            <person name="Endo S."/>
            <person name="Ichikawa K."/>
            <person name="Agrawal G.K."/>
            <person name="Shioda S."/>
            <person name="Fukumoto M."/>
            <person name="Rakwal R."/>
        </authorList>
    </citation>
    <scope>INDUCTION BY GAMMA IRRADIATION</scope>
</reference>
<accession>Q6F6A2</accession>
<accession>A0A0P0XT34</accession>
<accession>C7J833</accession>
<accession>Q3LGA3</accession>
<accession>Q84LN6</accession>
<accession>Q8LM09</accession>
<evidence type="ECO:0000250" key="1"/>
<evidence type="ECO:0000250" key="2">
    <source>
        <dbReference type="UniProtKB" id="P00914"/>
    </source>
</evidence>
<evidence type="ECO:0000255" key="3"/>
<evidence type="ECO:0000256" key="4">
    <source>
        <dbReference type="SAM" id="MobiDB-lite"/>
    </source>
</evidence>
<evidence type="ECO:0000269" key="5">
    <source>
    </source>
</evidence>
<evidence type="ECO:0000269" key="6">
    <source>
    </source>
</evidence>
<evidence type="ECO:0000269" key="7">
    <source>
    </source>
</evidence>
<evidence type="ECO:0000269" key="8">
    <source>
    </source>
</evidence>
<evidence type="ECO:0000269" key="9">
    <source>
    </source>
</evidence>
<evidence type="ECO:0000269" key="10">
    <source>
    </source>
</evidence>
<evidence type="ECO:0000269" key="11">
    <source>
    </source>
</evidence>
<evidence type="ECO:0000269" key="12">
    <source>
    </source>
</evidence>
<evidence type="ECO:0000269" key="13">
    <source>
    </source>
</evidence>
<evidence type="ECO:0000305" key="14"/>
<evidence type="ECO:0007744" key="15">
    <source>
        <dbReference type="PDB" id="3UMV"/>
    </source>
</evidence>
<evidence type="ECO:0007829" key="16">
    <source>
        <dbReference type="PDB" id="3UMV"/>
    </source>
</evidence>
<dbReference type="EC" id="4.1.99.3"/>
<dbReference type="EMBL" id="AB096003">
    <property type="protein sequence ID" value="BAC76449.2"/>
    <property type="molecule type" value="mRNA"/>
</dbReference>
<dbReference type="EMBL" id="AB099694">
    <property type="protein sequence ID" value="BAD26607.1"/>
    <property type="molecule type" value="Genomic_DNA"/>
</dbReference>
<dbReference type="EMBL" id="AB198744">
    <property type="protein sequence ID" value="BAE06248.1"/>
    <property type="molecule type" value="Genomic_DNA"/>
</dbReference>
<dbReference type="EMBL" id="AB210109">
    <property type="protein sequence ID" value="BAE45635.1"/>
    <property type="molecule type" value="mRNA"/>
</dbReference>
<dbReference type="EMBL" id="AC131375">
    <property type="protein sequence ID" value="AAN04184.1"/>
    <property type="status" value="ALT_SEQ"/>
    <property type="molecule type" value="Genomic_DNA"/>
</dbReference>
<dbReference type="EMBL" id="DP000086">
    <property type="protein sequence ID" value="ABB46863.1"/>
    <property type="molecule type" value="Genomic_DNA"/>
</dbReference>
<dbReference type="EMBL" id="AP008216">
    <property type="protein sequence ID" value="BAH94769.1"/>
    <property type="status" value="ALT_SEQ"/>
    <property type="molecule type" value="Genomic_DNA"/>
</dbReference>
<dbReference type="EMBL" id="AP014966">
    <property type="protein sequence ID" value="BAT10044.1"/>
    <property type="molecule type" value="Genomic_DNA"/>
</dbReference>
<dbReference type="RefSeq" id="XP_015614933.1">
    <property type="nucleotide sequence ID" value="XM_015759447.1"/>
</dbReference>
<dbReference type="PDB" id="3UMV">
    <property type="method" value="X-ray"/>
    <property type="resolution" value="1.70 A"/>
    <property type="chains" value="A/B=1-506"/>
</dbReference>
<dbReference type="PDBsum" id="3UMV"/>
<dbReference type="SMR" id="Q6F6A2"/>
<dbReference type="DIP" id="DIP-62040N"/>
<dbReference type="FunCoup" id="Q6F6A2">
    <property type="interactions" value="4"/>
</dbReference>
<dbReference type="IntAct" id="Q6F6A2">
    <property type="interactions" value="1"/>
</dbReference>
<dbReference type="STRING" id="39947.Q6F6A2"/>
<dbReference type="iPTMnet" id="Q6F6A2"/>
<dbReference type="PaxDb" id="39947-Q6F6A2"/>
<dbReference type="EnsemblPlants" id="Os10t0167600-02">
    <property type="protein sequence ID" value="Os10t0167600-02"/>
    <property type="gene ID" value="Os10g0167600"/>
</dbReference>
<dbReference type="Gramene" id="Os10t0167600-02">
    <property type="protein sequence ID" value="Os10t0167600-02"/>
    <property type="gene ID" value="Os10g0167600"/>
</dbReference>
<dbReference type="KEGG" id="dosa:Os10g0167600"/>
<dbReference type="eggNOG" id="KOG0133">
    <property type="taxonomic scope" value="Eukaryota"/>
</dbReference>
<dbReference type="HOGENOM" id="CLU_026342_2_0_1"/>
<dbReference type="InParanoid" id="Q6F6A2"/>
<dbReference type="OrthoDB" id="496749at2759"/>
<dbReference type="BRENDA" id="4.1.99.3">
    <property type="organism ID" value="8948"/>
</dbReference>
<dbReference type="EvolutionaryTrace" id="Q6F6A2"/>
<dbReference type="Proteomes" id="UP000000763">
    <property type="component" value="Chromosome 10"/>
</dbReference>
<dbReference type="Proteomes" id="UP000059680">
    <property type="component" value="Chromosome 10"/>
</dbReference>
<dbReference type="ExpressionAtlas" id="Q6F6A2">
    <property type="expression patterns" value="baseline and differential"/>
</dbReference>
<dbReference type="GO" id="GO:0005634">
    <property type="term" value="C:nucleus"/>
    <property type="evidence" value="ECO:0007669"/>
    <property type="project" value="UniProtKB-SubCell"/>
</dbReference>
<dbReference type="GO" id="GO:0003904">
    <property type="term" value="F:deoxyribodipyrimidine photo-lyase activity"/>
    <property type="evidence" value="ECO:0000314"/>
    <property type="project" value="UniProtKB"/>
</dbReference>
<dbReference type="GO" id="GO:0003677">
    <property type="term" value="F:DNA binding"/>
    <property type="evidence" value="ECO:0007669"/>
    <property type="project" value="UniProtKB-KW"/>
</dbReference>
<dbReference type="GO" id="GO:0071949">
    <property type="term" value="F:FAD binding"/>
    <property type="evidence" value="ECO:0000314"/>
    <property type="project" value="UniProtKB"/>
</dbReference>
<dbReference type="GO" id="GO:0006281">
    <property type="term" value="P:DNA repair"/>
    <property type="evidence" value="ECO:0000314"/>
    <property type="project" value="UniProtKB"/>
</dbReference>
<dbReference type="GO" id="GO:0000719">
    <property type="term" value="P:photoreactive repair"/>
    <property type="evidence" value="ECO:0000318"/>
    <property type="project" value="GO_Central"/>
</dbReference>
<dbReference type="GO" id="GO:0009650">
    <property type="term" value="P:UV protection"/>
    <property type="evidence" value="ECO:0000314"/>
    <property type="project" value="UniProtKB"/>
</dbReference>
<dbReference type="FunFam" id="1.10.579.10:FF:000002">
    <property type="entry name" value="Deoxyribodipyrimidine photolyase"/>
    <property type="match status" value="1"/>
</dbReference>
<dbReference type="FunFam" id="1.25.40.80:FF:000004">
    <property type="entry name" value="Deoxyribodipyrimidine photolyase"/>
    <property type="match status" value="1"/>
</dbReference>
<dbReference type="FunFam" id="3.40.50.620:FF:000110">
    <property type="entry name" value="Deoxyribodipyrimidine photolyase"/>
    <property type="match status" value="1"/>
</dbReference>
<dbReference type="Gene3D" id="1.25.40.80">
    <property type="match status" value="1"/>
</dbReference>
<dbReference type="Gene3D" id="1.10.579.10">
    <property type="entry name" value="DNA Cyclobutane Dipyrimidine Photolyase, subunit A, domain 3"/>
    <property type="match status" value="1"/>
</dbReference>
<dbReference type="Gene3D" id="3.40.50.620">
    <property type="entry name" value="HUPs"/>
    <property type="match status" value="1"/>
</dbReference>
<dbReference type="InterPro" id="IPR036134">
    <property type="entry name" value="Crypto/Photolyase_FAD-like_sf"/>
</dbReference>
<dbReference type="InterPro" id="IPR036155">
    <property type="entry name" value="Crypto/Photolyase_N_sf"/>
</dbReference>
<dbReference type="InterPro" id="IPR008148">
    <property type="entry name" value="DNA_photolyase_2"/>
</dbReference>
<dbReference type="InterPro" id="IPR032673">
    <property type="entry name" value="DNA_photolyase_2_CS"/>
</dbReference>
<dbReference type="InterPro" id="IPR006050">
    <property type="entry name" value="DNA_photolyase_N"/>
</dbReference>
<dbReference type="InterPro" id="IPR052219">
    <property type="entry name" value="Photolyase_Class-2"/>
</dbReference>
<dbReference type="InterPro" id="IPR014729">
    <property type="entry name" value="Rossmann-like_a/b/a_fold"/>
</dbReference>
<dbReference type="NCBIfam" id="TIGR00591">
    <property type="entry name" value="phr2"/>
    <property type="match status" value="1"/>
</dbReference>
<dbReference type="PANTHER" id="PTHR10211:SF0">
    <property type="entry name" value="DEOXYRIBODIPYRIMIDINE PHOTO-LYASE"/>
    <property type="match status" value="1"/>
</dbReference>
<dbReference type="PANTHER" id="PTHR10211">
    <property type="entry name" value="DEOXYRIBODIPYRIMIDINE PHOTOLYASE"/>
    <property type="match status" value="1"/>
</dbReference>
<dbReference type="Pfam" id="PF00875">
    <property type="entry name" value="DNA_photolyase"/>
    <property type="match status" value="1"/>
</dbReference>
<dbReference type="SUPFAM" id="SSF48173">
    <property type="entry name" value="Cryptochrome/photolyase FAD-binding domain"/>
    <property type="match status" value="1"/>
</dbReference>
<dbReference type="SUPFAM" id="SSF52425">
    <property type="entry name" value="Cryptochrome/photolyase, N-terminal domain"/>
    <property type="match status" value="1"/>
</dbReference>
<dbReference type="PROSITE" id="PS01083">
    <property type="entry name" value="DNA_PHOTOLYASES_2_1"/>
    <property type="match status" value="1"/>
</dbReference>
<dbReference type="PROSITE" id="PS01084">
    <property type="entry name" value="DNA_PHOTOLYASES_2_2"/>
    <property type="match status" value="1"/>
</dbReference>
<dbReference type="PROSITE" id="PS51645">
    <property type="entry name" value="PHR_CRY_ALPHA_BETA"/>
    <property type="match status" value="1"/>
</dbReference>
<comment type="function">
    <text evidence="5 7 8 9 10 11">Involved in repair of UV radiation-induced DNA damage. Catalyzes the light-dependent monomerization (300-600 nm) of cyclobutylpyrimidine dimers (CPDs), which are formed between adjacent bases on the same DNA strand upon exposure to ultraviolet radiation. Required for plant survival in the presence of UV-B light. Not involved in the repair of (6-4) photoproducts.</text>
</comment>
<comment type="catalytic activity">
    <reaction>
        <text>cyclobutadipyrimidine (in DNA) = 2 pyrimidine residues (in DNA).</text>
        <dbReference type="EC" id="4.1.99.3"/>
    </reaction>
</comment>
<comment type="cofactor">
    <cofactor evidence="11 12">
        <name>FAD</name>
        <dbReference type="ChEBI" id="CHEBI:57692"/>
    </cofactor>
    <text evidence="11 12">Binds 1 FAD per subunit.</text>
</comment>
<comment type="interaction">
    <interactant intactId="EBI-16205114">
        <id>Q6F6A2</id>
    </interactant>
    <interactant intactId="EBI-16205145">
        <id>Q10B79-1</id>
        <label>SPX4</label>
    </interactant>
    <organismsDiffer>false</organismsDiffer>
    <experiments>2</experiments>
</comment>
<comment type="subcellular location">
    <subcellularLocation>
        <location evidence="1">Nucleus</location>
    </subcellularLocation>
</comment>
<comment type="tissue specificity">
    <text evidence="6">Expressed in proliferating tissues. Highly expressed in roots and shoot apical meristem (SAM). Expressed in leaves, flag leaves, and panicle.</text>
</comment>
<comment type="induction">
    <text evidence="13">Induced by gamma irradiation.</text>
</comment>
<comment type="miscellaneous">
    <text>Over-expression of PHR decreases growth inhibition, leaf necrosis and CPDs accumulation under UV-B treatment.</text>
</comment>
<comment type="similarity">
    <text evidence="14">Belongs to the DNA photolyase class-2 family.</text>
</comment>
<comment type="sequence caution" evidence="14">
    <conflict type="erroneous gene model prediction">
        <sequence resource="EMBL-CDS" id="AAN04184"/>
    </conflict>
</comment>
<comment type="sequence caution" evidence="14">
    <conflict type="erroneous gene model prediction">
        <sequence resource="EMBL-CDS" id="BAH94769"/>
    </conflict>
</comment>
<proteinExistence type="evidence at protein level"/>
<keyword id="KW-0002">3D-structure</keyword>
<keyword id="KW-0227">DNA damage</keyword>
<keyword id="KW-0234">DNA repair</keyword>
<keyword id="KW-0238">DNA-binding</keyword>
<keyword id="KW-0274">FAD</keyword>
<keyword id="KW-0285">Flavoprotein</keyword>
<keyword id="KW-0456">Lyase</keyword>
<keyword id="KW-0547">Nucleotide-binding</keyword>
<keyword id="KW-0539">Nucleus</keyword>
<keyword id="KW-0597">Phosphoprotein</keyword>
<keyword id="KW-1185">Reference proteome</keyword>
<protein>
    <recommendedName>
        <fullName>Deoxyribodipyrimidine photo-lyase</fullName>
        <ecNumber>4.1.99.3</ecNumber>
    </recommendedName>
    <alternativeName>
        <fullName>DNA photolyase</fullName>
    </alternativeName>
    <alternativeName>
        <fullName>OsCPDII</fullName>
    </alternativeName>
    <alternativeName>
        <fullName>Photoreactivating enzyme</fullName>
    </alternativeName>
</protein>
<name>PHR_ORYSJ</name>
<gene>
    <name type="primary">PHR</name>
    <name type="ordered locus">Os10g0167600</name>
    <name type="ordered locus">LOC_Os10g08580</name>
    <name type="ORF">OSJNAb0015J03.12</name>
</gene>
<feature type="chain" id="PRO_0000407852" description="Deoxyribodipyrimidine photo-lyase">
    <location>
        <begin position="1"/>
        <end position="506"/>
    </location>
</feature>
<feature type="domain" description="Photolyase/cryptochrome alpha/beta">
    <location>
        <begin position="38"/>
        <end position="171"/>
    </location>
</feature>
<feature type="region of interest" description="Disordered" evidence="4">
    <location>
        <begin position="1"/>
        <end position="33"/>
    </location>
</feature>
<feature type="region of interest" description="Disordered" evidence="4">
    <location>
        <begin position="487"/>
        <end position="506"/>
    </location>
</feature>
<feature type="compositionally biased region" description="Pro residues" evidence="4">
    <location>
        <begin position="1"/>
        <end position="21"/>
    </location>
</feature>
<feature type="binding site" evidence="12 15">
    <location>
        <position position="268"/>
    </location>
    <ligand>
        <name>FAD</name>
        <dbReference type="ChEBI" id="CHEBI:57692"/>
    </ligand>
</feature>
<feature type="binding site" evidence="12 15">
    <location>
        <begin position="282"/>
        <end position="285"/>
    </location>
    <ligand>
        <name>FAD</name>
        <dbReference type="ChEBI" id="CHEBI:57692"/>
    </ligand>
</feature>
<feature type="binding site" evidence="2">
    <location>
        <begin position="319"/>
        <end position="327"/>
    </location>
    <ligand>
        <name>FAD</name>
        <dbReference type="ChEBI" id="CHEBI:57692"/>
    </ligand>
</feature>
<feature type="binding site" evidence="12 15">
    <location>
        <position position="390"/>
    </location>
    <ligand>
        <name>FAD</name>
        <dbReference type="ChEBI" id="CHEBI:57692"/>
    </ligand>
</feature>
<feature type="binding site" evidence="12 15">
    <location>
        <position position="421"/>
    </location>
    <ligand>
        <name>FAD</name>
        <dbReference type="ChEBI" id="CHEBI:57692"/>
    </ligand>
</feature>
<feature type="binding site" evidence="2">
    <location>
        <begin position="427"/>
        <end position="429"/>
    </location>
    <ligand>
        <name>FAD</name>
        <dbReference type="ChEBI" id="CHEBI:57692"/>
    </ligand>
</feature>
<feature type="binding site" evidence="12 15">
    <location>
        <position position="427"/>
    </location>
    <ligand>
        <name>FAD</name>
        <dbReference type="ChEBI" id="CHEBI:57692"/>
    </ligand>
</feature>
<feature type="site" description="Electron transfer via tryptophanyl radical" evidence="3">
    <location>
        <position position="378"/>
    </location>
</feature>
<feature type="site" description="Electron transfer via tryptophanyl radical" evidence="3">
    <location>
        <position position="399"/>
    </location>
</feature>
<feature type="site" description="Electron transfer via tryptophanyl radical" evidence="3">
    <location>
        <position position="406"/>
    </location>
</feature>
<feature type="modified residue" description="Phosphoserine" evidence="10">
    <location>
        <position position="312"/>
    </location>
</feature>
<feature type="sequence conflict" description="In Ref. 1; BAC76449." evidence="14" ref="1">
    <original>R</original>
    <variation>Q</variation>
    <location>
        <position position="126"/>
    </location>
</feature>
<feature type="helix" evidence="16">
    <location>
        <begin position="23"/>
        <end position="25"/>
    </location>
</feature>
<feature type="strand" evidence="16">
    <location>
        <begin position="26"/>
        <end position="30"/>
    </location>
</feature>
<feature type="strand" evidence="16">
    <location>
        <begin position="40"/>
        <end position="46"/>
    </location>
</feature>
<feature type="helix" evidence="16">
    <location>
        <begin position="54"/>
        <end position="65"/>
    </location>
</feature>
<feature type="strand" evidence="16">
    <location>
        <begin position="70"/>
        <end position="75"/>
    </location>
</feature>
<feature type="helix" evidence="16">
    <location>
        <begin position="82"/>
        <end position="84"/>
    </location>
</feature>
<feature type="helix" evidence="16">
    <location>
        <begin position="87"/>
        <end position="106"/>
    </location>
</feature>
<feature type="strand" evidence="16">
    <location>
        <begin position="111"/>
        <end position="116"/>
    </location>
</feature>
<feature type="helix" evidence="16">
    <location>
        <begin position="120"/>
        <end position="127"/>
    </location>
</feature>
<feature type="strand" evidence="16">
    <location>
        <begin position="131"/>
        <end position="135"/>
    </location>
</feature>
<feature type="helix" evidence="16">
    <location>
        <begin position="141"/>
        <end position="157"/>
    </location>
</feature>
<feature type="strand" evidence="16">
    <location>
        <begin position="161"/>
        <end position="166"/>
    </location>
</feature>
<feature type="helix" evidence="16">
    <location>
        <begin position="174"/>
        <end position="177"/>
    </location>
</feature>
<feature type="helix" evidence="16">
    <location>
        <begin position="185"/>
        <end position="193"/>
    </location>
</feature>
<feature type="helix" evidence="16">
    <location>
        <begin position="196"/>
        <end position="199"/>
    </location>
</feature>
<feature type="helix" evidence="16">
    <location>
        <begin position="222"/>
        <end position="231"/>
    </location>
</feature>
<feature type="helix" evidence="16">
    <location>
        <begin position="246"/>
        <end position="254"/>
    </location>
</feature>
<feature type="turn" evidence="16">
    <location>
        <begin position="256"/>
        <end position="258"/>
    </location>
</feature>
<feature type="helix" evidence="16">
    <location>
        <begin position="260"/>
        <end position="263"/>
    </location>
</feature>
<feature type="helix" evidence="16">
    <location>
        <begin position="265"/>
        <end position="267"/>
    </location>
</feature>
<feature type="helix" evidence="16">
    <location>
        <begin position="268"/>
        <end position="271"/>
    </location>
</feature>
<feature type="helix" evidence="16">
    <location>
        <begin position="278"/>
        <end position="280"/>
    </location>
</feature>
<feature type="helix" evidence="16">
    <location>
        <begin position="285"/>
        <end position="289"/>
    </location>
</feature>
<feature type="helix" evidence="16">
    <location>
        <begin position="295"/>
        <end position="305"/>
    </location>
</feature>
<feature type="helix" evidence="16">
    <location>
        <begin position="306"/>
        <end position="308"/>
    </location>
</feature>
<feature type="helix" evidence="16">
    <location>
        <begin position="310"/>
        <end position="320"/>
    </location>
</feature>
<feature type="helix" evidence="16">
    <location>
        <begin position="322"/>
        <end position="333"/>
    </location>
</feature>
<feature type="turn" evidence="16">
    <location>
        <begin position="335"/>
        <end position="338"/>
    </location>
</feature>
<feature type="helix" evidence="16">
    <location>
        <begin position="340"/>
        <end position="342"/>
    </location>
</feature>
<feature type="helix" evidence="16">
    <location>
        <begin position="345"/>
        <end position="353"/>
    </location>
</feature>
<feature type="turn" evidence="16">
    <location>
        <begin position="354"/>
        <end position="356"/>
    </location>
</feature>
<feature type="helix" evidence="16">
    <location>
        <begin position="365"/>
        <end position="369"/>
    </location>
</feature>
<feature type="helix" evidence="16">
    <location>
        <begin position="376"/>
        <end position="388"/>
    </location>
</feature>
<feature type="helix" evidence="16">
    <location>
        <begin position="393"/>
        <end position="405"/>
    </location>
</feature>
<feature type="strand" evidence="16">
    <location>
        <begin position="407"/>
        <end position="409"/>
    </location>
</feature>
<feature type="helix" evidence="16">
    <location>
        <begin position="410"/>
        <end position="424"/>
    </location>
</feature>
<feature type="helix" evidence="16">
    <location>
        <begin position="431"/>
        <end position="442"/>
    </location>
</feature>
<feature type="turn" evidence="16">
    <location>
        <begin position="453"/>
        <end position="455"/>
    </location>
</feature>
<feature type="helix" evidence="16">
    <location>
        <begin position="463"/>
        <end position="469"/>
    </location>
</feature>
<feature type="helix" evidence="16">
    <location>
        <begin position="472"/>
        <end position="489"/>
    </location>
</feature>